<keyword id="KW-0012">Acyltransferase</keyword>
<keyword id="KW-0963">Cytoplasm</keyword>
<keyword id="KW-0808">Transferase</keyword>
<evidence type="ECO:0000255" key="1">
    <source>
        <dbReference type="HAMAP-Rule" id="MF_00689"/>
    </source>
</evidence>
<name>BPT_VIBC1</name>
<protein>
    <recommendedName>
        <fullName evidence="1">Aspartate/glutamate leucyltransferase</fullName>
        <ecNumber evidence="1">2.3.2.29</ecNumber>
    </recommendedName>
</protein>
<dbReference type="EC" id="2.3.2.29" evidence="1"/>
<dbReference type="EMBL" id="CP000789">
    <property type="protein sequence ID" value="ABU70539.1"/>
    <property type="molecule type" value="Genomic_DNA"/>
</dbReference>
<dbReference type="RefSeq" id="WP_012127425.1">
    <property type="nucleotide sequence ID" value="NC_009783.1"/>
</dbReference>
<dbReference type="SMR" id="A7N1L8"/>
<dbReference type="KEGG" id="vha:VIBHAR_01569"/>
<dbReference type="PATRIC" id="fig|338187.25.peg.1094"/>
<dbReference type="Proteomes" id="UP000008152">
    <property type="component" value="Chromosome I"/>
</dbReference>
<dbReference type="GO" id="GO:0005737">
    <property type="term" value="C:cytoplasm"/>
    <property type="evidence" value="ECO:0007669"/>
    <property type="project" value="UniProtKB-SubCell"/>
</dbReference>
<dbReference type="GO" id="GO:0004057">
    <property type="term" value="F:arginyl-tRNA--protein transferase activity"/>
    <property type="evidence" value="ECO:0007669"/>
    <property type="project" value="InterPro"/>
</dbReference>
<dbReference type="GO" id="GO:0008914">
    <property type="term" value="F:leucyl-tRNA--protein transferase activity"/>
    <property type="evidence" value="ECO:0007669"/>
    <property type="project" value="UniProtKB-UniRule"/>
</dbReference>
<dbReference type="GO" id="GO:0071596">
    <property type="term" value="P:ubiquitin-dependent protein catabolic process via the N-end rule pathway"/>
    <property type="evidence" value="ECO:0007669"/>
    <property type="project" value="InterPro"/>
</dbReference>
<dbReference type="HAMAP" id="MF_00689">
    <property type="entry name" value="Bpt"/>
    <property type="match status" value="1"/>
</dbReference>
<dbReference type="InterPro" id="IPR016181">
    <property type="entry name" value="Acyl_CoA_acyltransferase"/>
</dbReference>
<dbReference type="InterPro" id="IPR017138">
    <property type="entry name" value="Asp_Glu_LeuTrfase"/>
</dbReference>
<dbReference type="InterPro" id="IPR030700">
    <property type="entry name" value="N-end_Aminoacyl_Trfase"/>
</dbReference>
<dbReference type="InterPro" id="IPR007472">
    <property type="entry name" value="N-end_Aminoacyl_Trfase_C"/>
</dbReference>
<dbReference type="InterPro" id="IPR007471">
    <property type="entry name" value="N-end_Aminoacyl_Trfase_N"/>
</dbReference>
<dbReference type="NCBIfam" id="NF002342">
    <property type="entry name" value="PRK01305.1-3"/>
    <property type="match status" value="1"/>
</dbReference>
<dbReference type="NCBIfam" id="NF002345">
    <property type="entry name" value="PRK01305.2-2"/>
    <property type="match status" value="1"/>
</dbReference>
<dbReference type="NCBIfam" id="NF002346">
    <property type="entry name" value="PRK01305.2-3"/>
    <property type="match status" value="1"/>
</dbReference>
<dbReference type="PANTHER" id="PTHR21367">
    <property type="entry name" value="ARGININE-TRNA-PROTEIN TRANSFERASE 1"/>
    <property type="match status" value="1"/>
</dbReference>
<dbReference type="PANTHER" id="PTHR21367:SF1">
    <property type="entry name" value="ARGINYL-TRNA--PROTEIN TRANSFERASE 1"/>
    <property type="match status" value="1"/>
</dbReference>
<dbReference type="Pfam" id="PF04377">
    <property type="entry name" value="ATE_C"/>
    <property type="match status" value="1"/>
</dbReference>
<dbReference type="Pfam" id="PF04376">
    <property type="entry name" value="ATE_N"/>
    <property type="match status" value="1"/>
</dbReference>
<dbReference type="PIRSF" id="PIRSF037208">
    <property type="entry name" value="ATE_pro_prd"/>
    <property type="match status" value="1"/>
</dbReference>
<dbReference type="SUPFAM" id="SSF55729">
    <property type="entry name" value="Acyl-CoA N-acyltransferases (Nat)"/>
    <property type="match status" value="1"/>
</dbReference>
<sequence>MSTDLQHIRIGLTNNHPCSYLPEREERVAVALDENLHTEDNYQVLMANGFRRSGDTIYKPHCQHCNACQPIRIAVPDFIPSKSQKRLQSKGKALHWEMKPELDPNWFDLYSRYIYERHKDGTMFPPREDEFARFTQTTWLTTGFLHIYDESDRLLAVAVTDIMDKCASAFYTFFDPDYPLSLGTLGVLFQLEYCQRENKHWLYLGYQIDECPAMNYKTRFQRHQRLVNQRWQG</sequence>
<comment type="function">
    <text evidence="1">Functions in the N-end rule pathway of protein degradation where it conjugates Leu from its aminoacyl-tRNA to the N-termini of proteins containing an N-terminal aspartate or glutamate.</text>
</comment>
<comment type="catalytic activity">
    <reaction evidence="1">
        <text>N-terminal L-glutamyl-[protein] + L-leucyl-tRNA(Leu) = N-terminal L-leucyl-L-glutamyl-[protein] + tRNA(Leu) + H(+)</text>
        <dbReference type="Rhea" id="RHEA:50412"/>
        <dbReference type="Rhea" id="RHEA-COMP:9613"/>
        <dbReference type="Rhea" id="RHEA-COMP:9622"/>
        <dbReference type="Rhea" id="RHEA-COMP:12664"/>
        <dbReference type="Rhea" id="RHEA-COMP:12668"/>
        <dbReference type="ChEBI" id="CHEBI:15378"/>
        <dbReference type="ChEBI" id="CHEBI:64721"/>
        <dbReference type="ChEBI" id="CHEBI:78442"/>
        <dbReference type="ChEBI" id="CHEBI:78494"/>
        <dbReference type="ChEBI" id="CHEBI:133041"/>
        <dbReference type="EC" id="2.3.2.29"/>
    </reaction>
</comment>
<comment type="catalytic activity">
    <reaction evidence="1">
        <text>N-terminal L-aspartyl-[protein] + L-leucyl-tRNA(Leu) = N-terminal L-leucyl-L-aspartyl-[protein] + tRNA(Leu) + H(+)</text>
        <dbReference type="Rhea" id="RHEA:50420"/>
        <dbReference type="Rhea" id="RHEA-COMP:9613"/>
        <dbReference type="Rhea" id="RHEA-COMP:9622"/>
        <dbReference type="Rhea" id="RHEA-COMP:12669"/>
        <dbReference type="Rhea" id="RHEA-COMP:12674"/>
        <dbReference type="ChEBI" id="CHEBI:15378"/>
        <dbReference type="ChEBI" id="CHEBI:64720"/>
        <dbReference type="ChEBI" id="CHEBI:78442"/>
        <dbReference type="ChEBI" id="CHEBI:78494"/>
        <dbReference type="ChEBI" id="CHEBI:133042"/>
        <dbReference type="EC" id="2.3.2.29"/>
    </reaction>
</comment>
<comment type="subcellular location">
    <subcellularLocation>
        <location evidence="1">Cytoplasm</location>
    </subcellularLocation>
</comment>
<comment type="similarity">
    <text evidence="1">Belongs to the R-transferase family. Bpt subfamily.</text>
</comment>
<feature type="chain" id="PRO_1000045155" description="Aspartate/glutamate leucyltransferase">
    <location>
        <begin position="1"/>
        <end position="233"/>
    </location>
</feature>
<reference key="1">
    <citation type="submission" date="2007-08" db="EMBL/GenBank/DDBJ databases">
        <authorList>
            <consortium name="The Vibrio harveyi Genome Sequencing Project"/>
            <person name="Bassler B."/>
            <person name="Clifton S.W."/>
            <person name="Fulton L."/>
            <person name="Delehaunty K."/>
            <person name="Fronick C."/>
            <person name="Harrison M."/>
            <person name="Markivic C."/>
            <person name="Fulton R."/>
            <person name="Tin-Wollam A.-M."/>
            <person name="Shah N."/>
            <person name="Pepin K."/>
            <person name="Nash W."/>
            <person name="Thiruvilangam P."/>
            <person name="Bhonagiri V."/>
            <person name="Waters C."/>
            <person name="Tu K.C."/>
            <person name="Irgon J."/>
            <person name="Wilson R.K."/>
        </authorList>
    </citation>
    <scope>NUCLEOTIDE SEQUENCE [LARGE SCALE GENOMIC DNA]</scope>
    <source>
        <strain>ATCC BAA-1116 / BB120</strain>
    </source>
</reference>
<proteinExistence type="inferred from homology"/>
<gene>
    <name evidence="1" type="primary">bpt</name>
    <name type="ordered locus">VIBHAR_01569</name>
</gene>
<organism>
    <name type="scientific">Vibrio campbellii (strain ATCC BAA-1116)</name>
    <dbReference type="NCBI Taxonomy" id="2902295"/>
    <lineage>
        <taxon>Bacteria</taxon>
        <taxon>Pseudomonadati</taxon>
        <taxon>Pseudomonadota</taxon>
        <taxon>Gammaproteobacteria</taxon>
        <taxon>Vibrionales</taxon>
        <taxon>Vibrionaceae</taxon>
        <taxon>Vibrio</taxon>
    </lineage>
</organism>
<accession>A7N1L8</accession>